<dbReference type="EMBL" id="DQ923117">
    <property type="protein sequence ID" value="ABI49864.1"/>
    <property type="molecule type" value="Genomic_DNA"/>
</dbReference>
<dbReference type="RefSeq" id="YP_740651.1">
    <property type="nucleotide sequence ID" value="NC_008336.1"/>
</dbReference>
<dbReference type="SMR" id="Q09FW0"/>
<dbReference type="GeneID" id="4271592"/>
<dbReference type="GO" id="GO:0009535">
    <property type="term" value="C:chloroplast thylakoid membrane"/>
    <property type="evidence" value="ECO:0007669"/>
    <property type="project" value="UniProtKB-SubCell"/>
</dbReference>
<dbReference type="GO" id="GO:0015979">
    <property type="term" value="P:photosynthesis"/>
    <property type="evidence" value="ECO:0007669"/>
    <property type="project" value="UniProtKB-UniRule"/>
</dbReference>
<dbReference type="FunFam" id="1.25.40.10:FF:000004">
    <property type="entry name" value="Photosystem I assembly protein Ycf3"/>
    <property type="match status" value="1"/>
</dbReference>
<dbReference type="Gene3D" id="1.25.40.10">
    <property type="entry name" value="Tetratricopeptide repeat domain"/>
    <property type="match status" value="1"/>
</dbReference>
<dbReference type="HAMAP" id="MF_00439">
    <property type="entry name" value="Ycf3"/>
    <property type="match status" value="1"/>
</dbReference>
<dbReference type="InterPro" id="IPR022818">
    <property type="entry name" value="PSI_Ycf3_assembly"/>
</dbReference>
<dbReference type="InterPro" id="IPR011990">
    <property type="entry name" value="TPR-like_helical_dom_sf"/>
</dbReference>
<dbReference type="InterPro" id="IPR019734">
    <property type="entry name" value="TPR_rpt"/>
</dbReference>
<dbReference type="InterPro" id="IPR051685">
    <property type="entry name" value="Ycf3/AcsC/BcsC/TPR_MFPF"/>
</dbReference>
<dbReference type="NCBIfam" id="NF002725">
    <property type="entry name" value="PRK02603.1"/>
    <property type="match status" value="1"/>
</dbReference>
<dbReference type="PANTHER" id="PTHR44943">
    <property type="entry name" value="CELLULOSE SYNTHASE OPERON PROTEIN C"/>
    <property type="match status" value="1"/>
</dbReference>
<dbReference type="PANTHER" id="PTHR44943:SF8">
    <property type="entry name" value="TPR REPEAT-CONTAINING PROTEIN MJ0263"/>
    <property type="match status" value="1"/>
</dbReference>
<dbReference type="Pfam" id="PF00515">
    <property type="entry name" value="TPR_1"/>
    <property type="match status" value="1"/>
</dbReference>
<dbReference type="SMART" id="SM00028">
    <property type="entry name" value="TPR"/>
    <property type="match status" value="3"/>
</dbReference>
<dbReference type="SUPFAM" id="SSF48452">
    <property type="entry name" value="TPR-like"/>
    <property type="match status" value="1"/>
</dbReference>
<dbReference type="PROSITE" id="PS50005">
    <property type="entry name" value="TPR"/>
    <property type="match status" value="3"/>
</dbReference>
<dbReference type="PROSITE" id="PS50293">
    <property type="entry name" value="TPR_REGION"/>
    <property type="match status" value="2"/>
</dbReference>
<geneLocation type="chloroplast"/>
<protein>
    <recommendedName>
        <fullName evidence="1">Photosystem I assembly protein Ycf3</fullName>
    </recommendedName>
</protein>
<organism>
    <name type="scientific">Nandina domestica</name>
    <name type="common">Heavenly bamboo</name>
    <dbReference type="NCBI Taxonomy" id="41776"/>
    <lineage>
        <taxon>Eukaryota</taxon>
        <taxon>Viridiplantae</taxon>
        <taxon>Streptophyta</taxon>
        <taxon>Embryophyta</taxon>
        <taxon>Tracheophyta</taxon>
        <taxon>Spermatophyta</taxon>
        <taxon>Magnoliopsida</taxon>
        <taxon>Ranunculales</taxon>
        <taxon>Berberidaceae</taxon>
        <taxon>Nandinoideae</taxon>
        <taxon>Nandineae</taxon>
        <taxon>Nandina</taxon>
    </lineage>
</organism>
<gene>
    <name evidence="1" type="primary">ycf3</name>
</gene>
<feature type="chain" id="PRO_0000325069" description="Photosystem I assembly protein Ycf3">
    <location>
        <begin position="1"/>
        <end position="168"/>
    </location>
</feature>
<feature type="repeat" description="TPR 1">
    <location>
        <begin position="35"/>
        <end position="68"/>
    </location>
</feature>
<feature type="repeat" description="TPR 2">
    <location>
        <begin position="72"/>
        <end position="105"/>
    </location>
</feature>
<feature type="repeat" description="TPR 3">
    <location>
        <begin position="120"/>
        <end position="153"/>
    </location>
</feature>
<name>YCF3_NANDO</name>
<keyword id="KW-0150">Chloroplast</keyword>
<keyword id="KW-0472">Membrane</keyword>
<keyword id="KW-0602">Photosynthesis</keyword>
<keyword id="KW-0934">Plastid</keyword>
<keyword id="KW-0677">Repeat</keyword>
<keyword id="KW-0793">Thylakoid</keyword>
<keyword id="KW-0802">TPR repeat</keyword>
<accession>Q09FW0</accession>
<comment type="function">
    <text evidence="1">Essential for the assembly of the photosystem I (PSI) complex. May act as a chaperone-like factor to guide the assembly of the PSI subunits.</text>
</comment>
<comment type="subcellular location">
    <subcellularLocation>
        <location evidence="1">Plastid</location>
        <location evidence="1">Chloroplast thylakoid membrane</location>
        <topology evidence="1">Peripheral membrane protein</topology>
    </subcellularLocation>
</comment>
<comment type="similarity">
    <text evidence="1">Belongs to the Ycf3 family.</text>
</comment>
<sequence length="168" mass="19553">MPRSRINGNFIDKTFSIVANILLRIIPTTSGEKEAFTYYRDGMSAQSEGNYAEALQNYYEATRLEIDPYDRSYILYNIGLIHTSNGEHTKALEYYFRALERNPFLPQAFNNMAVICHYRGEQAIQQGDSEIAESWFDQAAEYWKQAIALTPGNYIEAHNWLKITRRFE</sequence>
<proteinExistence type="inferred from homology"/>
<evidence type="ECO:0000255" key="1">
    <source>
        <dbReference type="HAMAP-Rule" id="MF_00439"/>
    </source>
</evidence>
<reference key="1">
    <citation type="journal article" date="2006" name="BMC Plant Biol.">
        <title>Rapid and accurate pyrosequencing of angiosperm plastid genomes.</title>
        <authorList>
            <person name="Moore M.J."/>
            <person name="Dhingra A."/>
            <person name="Soltis P.S."/>
            <person name="Shaw R."/>
            <person name="Farmerie W.G."/>
            <person name="Folta K.M."/>
            <person name="Soltis D.E."/>
        </authorList>
    </citation>
    <scope>NUCLEOTIDE SEQUENCE [LARGE SCALE GENOMIC DNA]</scope>
</reference>